<protein>
    <recommendedName>
        <fullName evidence="1">UPF0299 membrane protein YohJ</fullName>
    </recommendedName>
</protein>
<sequence length="132" mass="14614">MSKSLNIIWQYIRAFVLIYACLYAGIFLASLLPITIPGSIIGMLILFVLLALQILPAKWVNPGCYVLIRYMALLFVPIGVGVMQYFDLLRAQFGPVVVSCAISTLVVFVVVSWSSHLIHGERKVVGQKGTKK</sequence>
<accession>B4SY13</accession>
<name>YOHJ_SALNS</name>
<dbReference type="EMBL" id="CP001113">
    <property type="protein sequence ID" value="ACF65600.1"/>
    <property type="molecule type" value="Genomic_DNA"/>
</dbReference>
<dbReference type="RefSeq" id="WP_000045719.1">
    <property type="nucleotide sequence ID" value="NZ_CCMR01000002.1"/>
</dbReference>
<dbReference type="SMR" id="B4SY13"/>
<dbReference type="KEGG" id="see:SNSL254_A2371"/>
<dbReference type="HOGENOM" id="CLU_113736_1_1_6"/>
<dbReference type="Proteomes" id="UP000008824">
    <property type="component" value="Chromosome"/>
</dbReference>
<dbReference type="GO" id="GO:0005886">
    <property type="term" value="C:plasma membrane"/>
    <property type="evidence" value="ECO:0007669"/>
    <property type="project" value="UniProtKB-SubCell"/>
</dbReference>
<dbReference type="HAMAP" id="MF_01144">
    <property type="entry name" value="UPF0299"/>
    <property type="match status" value="1"/>
</dbReference>
<dbReference type="InterPro" id="IPR005538">
    <property type="entry name" value="LrgA/CidA"/>
</dbReference>
<dbReference type="InterPro" id="IPR022957">
    <property type="entry name" value="Uncharacterised_UPF0299"/>
</dbReference>
<dbReference type="NCBIfam" id="NF002494">
    <property type="entry name" value="PRK01821.1"/>
    <property type="match status" value="1"/>
</dbReference>
<dbReference type="PANTHER" id="PTHR33931">
    <property type="entry name" value="HOLIN-LIKE PROTEIN CIDA-RELATED"/>
    <property type="match status" value="1"/>
</dbReference>
<dbReference type="PANTHER" id="PTHR33931:SF5">
    <property type="entry name" value="UPF0299 MEMBRANE PROTEIN YOHJ"/>
    <property type="match status" value="1"/>
</dbReference>
<dbReference type="Pfam" id="PF03788">
    <property type="entry name" value="LrgA"/>
    <property type="match status" value="1"/>
</dbReference>
<proteinExistence type="inferred from homology"/>
<keyword id="KW-0997">Cell inner membrane</keyword>
<keyword id="KW-1003">Cell membrane</keyword>
<keyword id="KW-0472">Membrane</keyword>
<keyword id="KW-0812">Transmembrane</keyword>
<keyword id="KW-1133">Transmembrane helix</keyword>
<reference key="1">
    <citation type="journal article" date="2011" name="J. Bacteriol.">
        <title>Comparative genomics of 28 Salmonella enterica isolates: evidence for CRISPR-mediated adaptive sublineage evolution.</title>
        <authorList>
            <person name="Fricke W.F."/>
            <person name="Mammel M.K."/>
            <person name="McDermott P.F."/>
            <person name="Tartera C."/>
            <person name="White D.G."/>
            <person name="Leclerc J.E."/>
            <person name="Ravel J."/>
            <person name="Cebula T.A."/>
        </authorList>
    </citation>
    <scope>NUCLEOTIDE SEQUENCE [LARGE SCALE GENOMIC DNA]</scope>
    <source>
        <strain>SL254</strain>
    </source>
</reference>
<gene>
    <name evidence="1" type="primary">yohJ</name>
    <name type="ordered locus">SNSL254_A2371</name>
</gene>
<organism>
    <name type="scientific">Salmonella newport (strain SL254)</name>
    <dbReference type="NCBI Taxonomy" id="423368"/>
    <lineage>
        <taxon>Bacteria</taxon>
        <taxon>Pseudomonadati</taxon>
        <taxon>Pseudomonadota</taxon>
        <taxon>Gammaproteobacteria</taxon>
        <taxon>Enterobacterales</taxon>
        <taxon>Enterobacteriaceae</taxon>
        <taxon>Salmonella</taxon>
    </lineage>
</organism>
<evidence type="ECO:0000255" key="1">
    <source>
        <dbReference type="HAMAP-Rule" id="MF_01144"/>
    </source>
</evidence>
<feature type="chain" id="PRO_1000137372" description="UPF0299 membrane protein YohJ">
    <location>
        <begin position="1"/>
        <end position="132"/>
    </location>
</feature>
<feature type="transmembrane region" description="Helical" evidence="1">
    <location>
        <begin position="7"/>
        <end position="27"/>
    </location>
</feature>
<feature type="transmembrane region" description="Helical" evidence="1">
    <location>
        <begin position="31"/>
        <end position="51"/>
    </location>
</feature>
<feature type="transmembrane region" description="Helical" evidence="1">
    <location>
        <begin position="63"/>
        <end position="83"/>
    </location>
</feature>
<feature type="transmembrane region" description="Helical" evidence="1">
    <location>
        <begin position="93"/>
        <end position="113"/>
    </location>
</feature>
<comment type="subcellular location">
    <subcellularLocation>
        <location evidence="1">Cell inner membrane</location>
        <topology evidence="1">Multi-pass membrane protein</topology>
    </subcellularLocation>
</comment>
<comment type="similarity">
    <text evidence="1">Belongs to the UPF0299 family.</text>
</comment>